<keyword id="KW-0428">Leader peptide</keyword>
<keyword id="KW-1185">Reference proteome</keyword>
<sequence length="14" mass="1762">MNAAIFRFFFYFST</sequence>
<gene>
    <name type="primary">pheM</name>
    <name type="synonym">phtL</name>
    <name type="ordered locus">b1715</name>
    <name type="ordered locus">JW1705</name>
</gene>
<feature type="peptide" id="PRO_0000043981" description="Phenylalanine--tRNA ligase operon leader peptide">
    <location>
        <begin position="1"/>
        <end position="14"/>
    </location>
</feature>
<reference key="1">
    <citation type="journal article" date="1985" name="J. Mol. Biol.">
        <title>Attenuation control of the Escherichia coli phenylalanyl-tRNA synthetase operon.</title>
        <authorList>
            <person name="Springer M."/>
            <person name="Mayaux J.-F."/>
            <person name="Fayat G."/>
            <person name="Plumbridge J.A."/>
            <person name="Graffe M."/>
            <person name="Blanquet S."/>
            <person name="Grunberg-Manago M."/>
        </authorList>
    </citation>
    <scope>NUCLEOTIDE SEQUENCE [GENOMIC DNA]</scope>
</reference>
<reference key="2">
    <citation type="journal article" date="1983" name="J. Mol. Biol.">
        <title>Escherichia coli phenylalanyl-tRNA synthetase operon region. Evidence for an attenuation mechanism. Identification of the gene for the ribosomal protein L20.</title>
        <authorList>
            <person name="Fayat G."/>
            <person name="Mayaux J.-F."/>
            <person name="Sacerdot C."/>
            <person name="Fromant M."/>
            <person name="Springer M."/>
            <person name="Grunberg-Manago M."/>
            <person name="Blanquet S."/>
        </authorList>
    </citation>
    <scope>NUCLEOTIDE SEQUENCE [GENOMIC DNA]</scope>
</reference>
<reference key="3">
    <citation type="journal article" date="1984" name="Gene">
        <title>IS4 transposition in the attenuator region of the Escherichia coli pheS,T operon.</title>
        <authorList>
            <person name="Mayaux J.-F."/>
            <person name="Springer M."/>
            <person name="Graffe M."/>
            <person name="Fromant M."/>
            <person name="Fayat G."/>
        </authorList>
    </citation>
    <scope>NUCLEOTIDE SEQUENCE [GENOMIC DNA]</scope>
</reference>
<reference key="4">
    <citation type="journal article" date="1987" name="Biochimie">
        <title>Open reading frames in the control regions of the phenylalanyl-tRNA synthetase operon of E. coli.</title>
        <authorList>
            <person name="Springer M."/>
            <person name="Graffe M."/>
            <person name="Mayaux J.-F."/>
            <person name="Dardel F."/>
            <person name="Fayat G."/>
            <person name="Blanquet S."/>
            <person name="Grunberg-Manago M."/>
        </authorList>
    </citation>
    <scope>NUCLEOTIDE SEQUENCE [GENOMIC DNA]</scope>
</reference>
<reference key="5">
    <citation type="journal article" date="1997" name="Science">
        <title>The complete genome sequence of Escherichia coli K-12.</title>
        <authorList>
            <person name="Blattner F.R."/>
            <person name="Plunkett G. III"/>
            <person name="Bloch C.A."/>
            <person name="Perna N.T."/>
            <person name="Burland V."/>
            <person name="Riley M."/>
            <person name="Collado-Vides J."/>
            <person name="Glasner J.D."/>
            <person name="Rode C.K."/>
            <person name="Mayhew G.F."/>
            <person name="Gregor J."/>
            <person name="Davis N.W."/>
            <person name="Kirkpatrick H.A."/>
            <person name="Goeden M.A."/>
            <person name="Rose D.J."/>
            <person name="Mau B."/>
            <person name="Shao Y."/>
        </authorList>
    </citation>
    <scope>NUCLEOTIDE SEQUENCE [LARGE SCALE GENOMIC DNA]</scope>
    <source>
        <strain>K12 / MG1655 / ATCC 47076</strain>
    </source>
</reference>
<reference key="6">
    <citation type="journal article" date="2006" name="Mol. Syst. Biol.">
        <title>Highly accurate genome sequences of Escherichia coli K-12 strains MG1655 and W3110.</title>
        <authorList>
            <person name="Hayashi K."/>
            <person name="Morooka N."/>
            <person name="Yamamoto Y."/>
            <person name="Fujita K."/>
            <person name="Isono K."/>
            <person name="Choi S."/>
            <person name="Ohtsubo E."/>
            <person name="Baba T."/>
            <person name="Wanner B.L."/>
            <person name="Mori H."/>
            <person name="Horiuchi T."/>
        </authorList>
    </citation>
    <scope>NUCLEOTIDE SEQUENCE [LARGE SCALE GENOMIC DNA]</scope>
    <source>
        <strain>K12 / W3110 / ATCC 27325 / DSM 5911</strain>
    </source>
</reference>
<dbReference type="EMBL" id="M10423">
    <property type="protein sequence ID" value="AAA23961.1"/>
    <property type="molecule type" value="Genomic_DNA"/>
</dbReference>
<dbReference type="EMBL" id="V00291">
    <property type="protein sequence ID" value="CAA23563.1"/>
    <property type="molecule type" value="Genomic_DNA"/>
</dbReference>
<dbReference type="EMBL" id="AH000889">
    <property type="protein sequence ID" value="AAA24333.1"/>
    <property type="molecule type" value="Genomic_DNA"/>
</dbReference>
<dbReference type="EMBL" id="U00096">
    <property type="protein sequence ID" value="AAC74785.1"/>
    <property type="molecule type" value="Genomic_DNA"/>
</dbReference>
<dbReference type="EMBL" id="AP009048">
    <property type="protein sequence ID" value="BAE76506.1"/>
    <property type="molecule type" value="Genomic_DNA"/>
</dbReference>
<dbReference type="PIR" id="S11551">
    <property type="entry name" value="LFECFS"/>
</dbReference>
<dbReference type="RefSeq" id="NP_416230.1">
    <property type="nucleotide sequence ID" value="NC_000913.3"/>
</dbReference>
<dbReference type="RefSeq" id="WP_001386830.1">
    <property type="nucleotide sequence ID" value="NZ_STEB01000009.1"/>
</dbReference>
<dbReference type="FunCoup" id="P0AD74">
    <property type="interactions" value="7"/>
</dbReference>
<dbReference type="EnsemblBacteria" id="AAC74785">
    <property type="protein sequence ID" value="AAC74785"/>
    <property type="gene ID" value="b1715"/>
</dbReference>
<dbReference type="GeneID" id="947212"/>
<dbReference type="GeneID" id="98388756"/>
<dbReference type="KEGG" id="ecj:JW1705"/>
<dbReference type="KEGG" id="eco:b1715"/>
<dbReference type="PATRIC" id="fig|83333.113.peg.1766"/>
<dbReference type="EchoBASE" id="EB1251"/>
<dbReference type="HOGENOM" id="CLU_222433_0_0_6"/>
<dbReference type="InParanoid" id="P0AD74"/>
<dbReference type="BioCyc" id="EcoCyc:EG11272-MONOMER"/>
<dbReference type="PRO" id="PR:P0AD74"/>
<dbReference type="Proteomes" id="UP000000625">
    <property type="component" value="Chromosome"/>
</dbReference>
<dbReference type="GO" id="GO:0006355">
    <property type="term" value="P:regulation of DNA-templated transcription"/>
    <property type="evidence" value="ECO:0000315"/>
    <property type="project" value="EcoCyc"/>
</dbReference>
<dbReference type="InterPro" id="IPR049616">
    <property type="entry name" value="PheM"/>
</dbReference>
<dbReference type="NCBIfam" id="NF033686">
    <property type="entry name" value="leader_PheM_1"/>
    <property type="match status" value="1"/>
</dbReference>
<protein>
    <recommendedName>
        <fullName>Phenylalanine--tRNA ligase operon leader peptide</fullName>
    </recommendedName>
    <alternativeName>
        <fullName>pheST attenuator peptide</fullName>
    </alternativeName>
</protein>
<organism>
    <name type="scientific">Escherichia coli (strain K12)</name>
    <dbReference type="NCBI Taxonomy" id="83333"/>
    <lineage>
        <taxon>Bacteria</taxon>
        <taxon>Pseudomonadati</taxon>
        <taxon>Pseudomonadota</taxon>
        <taxon>Gammaproteobacteria</taxon>
        <taxon>Enterobacterales</taxon>
        <taxon>Enterobacteriaceae</taxon>
        <taxon>Escherichia</taxon>
    </lineage>
</organism>
<accession>P0AD74</accession>
<accession>P06985</accession>
<accession>Q2MB50</accession>
<name>LPF2_ECOLI</name>
<proteinExistence type="predicted"/>